<gene>
    <name evidence="1" type="primary">potA</name>
    <name type="ordered locus">Mkms_2612</name>
</gene>
<comment type="function">
    <text evidence="1">Part of the ABC transporter complex PotABCD involved in spermidine/putrescine import. Responsible for energy coupling to the transport system.</text>
</comment>
<comment type="catalytic activity">
    <reaction evidence="1">
        <text>ATP + H2O + polyamine-[polyamine-binding protein]Side 1 = ADP + phosphate + polyamineSide 2 + [polyamine-binding protein]Side 1.</text>
        <dbReference type="EC" id="7.6.2.11"/>
    </reaction>
</comment>
<comment type="subunit">
    <text evidence="1">The complex is composed of two ATP-binding proteins (PotA), two transmembrane proteins (PotB and PotC) and a solute-binding protein (PotD).</text>
</comment>
<comment type="subcellular location">
    <subcellularLocation>
        <location evidence="1">Cell membrane</location>
        <topology evidence="1">Peripheral membrane protein</topology>
    </subcellularLocation>
</comment>
<comment type="similarity">
    <text evidence="1">Belongs to the ABC transporter superfamily. Spermidine/putrescine importer (TC 3.A.1.11.1) family.</text>
</comment>
<feature type="chain" id="PRO_0000286251" description="Spermidine/putrescine import ATP-binding protein PotA">
    <location>
        <begin position="1"/>
        <end position="388"/>
    </location>
</feature>
<feature type="domain" description="ABC transporter" evidence="1">
    <location>
        <begin position="17"/>
        <end position="247"/>
    </location>
</feature>
<feature type="binding site" evidence="1">
    <location>
        <begin position="49"/>
        <end position="56"/>
    </location>
    <ligand>
        <name>ATP</name>
        <dbReference type="ChEBI" id="CHEBI:30616"/>
    </ligand>
</feature>
<evidence type="ECO:0000255" key="1">
    <source>
        <dbReference type="HAMAP-Rule" id="MF_01726"/>
    </source>
</evidence>
<organism>
    <name type="scientific">Mycobacterium sp. (strain KMS)</name>
    <dbReference type="NCBI Taxonomy" id="189918"/>
    <lineage>
        <taxon>Bacteria</taxon>
        <taxon>Bacillati</taxon>
        <taxon>Actinomycetota</taxon>
        <taxon>Actinomycetes</taxon>
        <taxon>Mycobacteriales</taxon>
        <taxon>Mycobacteriaceae</taxon>
        <taxon>Mycobacterium</taxon>
    </lineage>
</organism>
<protein>
    <recommendedName>
        <fullName evidence="1">Spermidine/putrescine import ATP-binding protein PotA</fullName>
        <ecNumber evidence="1">7.6.2.11</ecNumber>
    </recommendedName>
</protein>
<name>POTA_MYCSK</name>
<accession>A1UG51</accession>
<keyword id="KW-0067">ATP-binding</keyword>
<keyword id="KW-1003">Cell membrane</keyword>
<keyword id="KW-0472">Membrane</keyword>
<keyword id="KW-0547">Nucleotide-binding</keyword>
<keyword id="KW-1278">Translocase</keyword>
<keyword id="KW-0813">Transport</keyword>
<proteinExistence type="inferred from homology"/>
<reference key="1">
    <citation type="submission" date="2006-12" db="EMBL/GenBank/DDBJ databases">
        <title>Complete sequence of chromosome of Mycobacterium sp. KMS.</title>
        <authorList>
            <consortium name="US DOE Joint Genome Institute"/>
            <person name="Copeland A."/>
            <person name="Lucas S."/>
            <person name="Lapidus A."/>
            <person name="Barry K."/>
            <person name="Detter J.C."/>
            <person name="Glavina del Rio T."/>
            <person name="Hammon N."/>
            <person name="Israni S."/>
            <person name="Dalin E."/>
            <person name="Tice H."/>
            <person name="Pitluck S."/>
            <person name="Kiss H."/>
            <person name="Brettin T."/>
            <person name="Bruce D."/>
            <person name="Han C."/>
            <person name="Tapia R."/>
            <person name="Gilna P."/>
            <person name="Schmutz J."/>
            <person name="Larimer F."/>
            <person name="Land M."/>
            <person name="Hauser L."/>
            <person name="Kyrpides N."/>
            <person name="Mikhailova N."/>
            <person name="Miller C.D."/>
            <person name="Richardson P."/>
        </authorList>
    </citation>
    <scope>NUCLEOTIDE SEQUENCE [LARGE SCALE GENOMIC DNA]</scope>
    <source>
        <strain>KMS</strain>
    </source>
</reference>
<sequence length="388" mass="42602">MNQTVDGVAPNKSGPVIEIDHVTKRFADYVAVADADFSIASGEFFSMLGPSGCGKTTTLRMIAGFETPTSGAIRLEGTDVSRVPPHKRNVNTVFQHYALFPHMSVWDNVAYGPRSMKKDKSEVKRRVDELLEVVRLTDFAKRKPGQLSGGQQQRVALARALVNYPSALLLDEPLGALDLKLRHAMQFELKRIQREVGITFIYVTHDQEEALTMSDRIAVMNAGNVEQIGTPTDIYDRPATVFVANFIGQANLWSGRQTGRLNRDYVEIDVLGSKLKARPGDTAIEAGGHATLMVRPERLRVSMEPPVGDVAAVRATVRDMTFQGPVVRLSLVAPDDSPIVAHVGTEQQLPLLRPGDEVYVCWSPDASLVLPAADIPTTEDLEEMLDES</sequence>
<dbReference type="EC" id="7.6.2.11" evidence="1"/>
<dbReference type="EMBL" id="CP000518">
    <property type="protein sequence ID" value="ABL91809.1"/>
    <property type="molecule type" value="Genomic_DNA"/>
</dbReference>
<dbReference type="SMR" id="A1UG51"/>
<dbReference type="STRING" id="189918.Mkms_2612"/>
<dbReference type="KEGG" id="mkm:Mkms_2612"/>
<dbReference type="HOGENOM" id="CLU_000604_1_1_11"/>
<dbReference type="OrthoDB" id="9802264at2"/>
<dbReference type="GO" id="GO:0043190">
    <property type="term" value="C:ATP-binding cassette (ABC) transporter complex"/>
    <property type="evidence" value="ECO:0007669"/>
    <property type="project" value="InterPro"/>
</dbReference>
<dbReference type="GO" id="GO:0015594">
    <property type="term" value="F:ABC-type putrescine transporter activity"/>
    <property type="evidence" value="ECO:0007669"/>
    <property type="project" value="InterPro"/>
</dbReference>
<dbReference type="GO" id="GO:0005524">
    <property type="term" value="F:ATP binding"/>
    <property type="evidence" value="ECO:0007669"/>
    <property type="project" value="UniProtKB-KW"/>
</dbReference>
<dbReference type="GO" id="GO:0016887">
    <property type="term" value="F:ATP hydrolysis activity"/>
    <property type="evidence" value="ECO:0007669"/>
    <property type="project" value="InterPro"/>
</dbReference>
<dbReference type="CDD" id="cd03300">
    <property type="entry name" value="ABC_PotA_N"/>
    <property type="match status" value="1"/>
</dbReference>
<dbReference type="FunFam" id="3.40.50.300:FF:000133">
    <property type="entry name" value="Spermidine/putrescine import ATP-binding protein PotA"/>
    <property type="match status" value="1"/>
</dbReference>
<dbReference type="Gene3D" id="2.40.50.100">
    <property type="match status" value="1"/>
</dbReference>
<dbReference type="Gene3D" id="3.40.50.300">
    <property type="entry name" value="P-loop containing nucleotide triphosphate hydrolases"/>
    <property type="match status" value="1"/>
</dbReference>
<dbReference type="InterPro" id="IPR003593">
    <property type="entry name" value="AAA+_ATPase"/>
</dbReference>
<dbReference type="InterPro" id="IPR050093">
    <property type="entry name" value="ABC_SmlMolc_Importer"/>
</dbReference>
<dbReference type="InterPro" id="IPR003439">
    <property type="entry name" value="ABC_transporter-like_ATP-bd"/>
</dbReference>
<dbReference type="InterPro" id="IPR017871">
    <property type="entry name" value="ABC_transporter-like_CS"/>
</dbReference>
<dbReference type="InterPro" id="IPR008995">
    <property type="entry name" value="Mo/tungstate-bd_C_term_dom"/>
</dbReference>
<dbReference type="InterPro" id="IPR027417">
    <property type="entry name" value="P-loop_NTPase"/>
</dbReference>
<dbReference type="InterPro" id="IPR005893">
    <property type="entry name" value="PotA-like"/>
</dbReference>
<dbReference type="InterPro" id="IPR017879">
    <property type="entry name" value="PotA_ATP-bd"/>
</dbReference>
<dbReference type="InterPro" id="IPR013611">
    <property type="entry name" value="Transp-assoc_OB_typ2"/>
</dbReference>
<dbReference type="NCBIfam" id="TIGR01187">
    <property type="entry name" value="potA"/>
    <property type="match status" value="1"/>
</dbReference>
<dbReference type="PANTHER" id="PTHR42781">
    <property type="entry name" value="SPERMIDINE/PUTRESCINE IMPORT ATP-BINDING PROTEIN POTA"/>
    <property type="match status" value="1"/>
</dbReference>
<dbReference type="PANTHER" id="PTHR42781:SF4">
    <property type="entry name" value="SPERMIDINE_PUTRESCINE IMPORT ATP-BINDING PROTEIN POTA"/>
    <property type="match status" value="1"/>
</dbReference>
<dbReference type="Pfam" id="PF00005">
    <property type="entry name" value="ABC_tran"/>
    <property type="match status" value="1"/>
</dbReference>
<dbReference type="Pfam" id="PF08402">
    <property type="entry name" value="TOBE_2"/>
    <property type="match status" value="1"/>
</dbReference>
<dbReference type="SMART" id="SM00382">
    <property type="entry name" value="AAA"/>
    <property type="match status" value="1"/>
</dbReference>
<dbReference type="SUPFAM" id="SSF50331">
    <property type="entry name" value="MOP-like"/>
    <property type="match status" value="1"/>
</dbReference>
<dbReference type="SUPFAM" id="SSF52540">
    <property type="entry name" value="P-loop containing nucleoside triphosphate hydrolases"/>
    <property type="match status" value="1"/>
</dbReference>
<dbReference type="PROSITE" id="PS00211">
    <property type="entry name" value="ABC_TRANSPORTER_1"/>
    <property type="match status" value="1"/>
</dbReference>
<dbReference type="PROSITE" id="PS50893">
    <property type="entry name" value="ABC_TRANSPORTER_2"/>
    <property type="match status" value="1"/>
</dbReference>
<dbReference type="PROSITE" id="PS51305">
    <property type="entry name" value="POTA"/>
    <property type="match status" value="1"/>
</dbReference>